<protein>
    <recommendedName>
        <fullName evidence="1">3-dehydroquinate synthase</fullName>
        <shortName evidence="1">DHQS</shortName>
        <ecNumber evidence="1">4.2.3.4</ecNumber>
    </recommendedName>
</protein>
<sequence length="354" mass="40316">MKLQTTYPSNNYPIYVEHGAIDHISTYIDQFDQSFILIDEHVNQYFADKFDDILSYENVHKVIIPAGEKTKTFEQYQETLEYILSHHVTRNTAIIAVGGGATGDFAGFIAATLLRGVHFIQVPTTILAHDSSVGGKVGINSKQGKNLIGAFYRPTAVIYDLDFLKTLPFEQILSGYAEVYKHALLNGESATQDIEQHFKDREILQSLNGMDKYIAKGIETKLDIVIADEKEQGVRKFLNLGHTFGHAVEYYHKIPHGHAVMVGIIYQFIVANALFDSKHDINHYIQYLIQLGYPLDMITDLDFETLYQYMLSDKKNDKQGVQMVLIRQFGDIVVQHVDQLTLQHACEQLKTYFK</sequence>
<comment type="function">
    <text evidence="1">Catalyzes the conversion of 3-deoxy-D-arabino-heptulosonate 7-phosphate (DAHP) to dehydroquinate (DHQ).</text>
</comment>
<comment type="catalytic activity">
    <reaction evidence="1">
        <text>7-phospho-2-dehydro-3-deoxy-D-arabino-heptonate = 3-dehydroquinate + phosphate</text>
        <dbReference type="Rhea" id="RHEA:21968"/>
        <dbReference type="ChEBI" id="CHEBI:32364"/>
        <dbReference type="ChEBI" id="CHEBI:43474"/>
        <dbReference type="ChEBI" id="CHEBI:58394"/>
        <dbReference type="EC" id="4.2.3.4"/>
    </reaction>
</comment>
<comment type="cofactor">
    <cofactor evidence="1">
        <name>Co(2+)</name>
        <dbReference type="ChEBI" id="CHEBI:48828"/>
    </cofactor>
    <cofactor evidence="1">
        <name>Zn(2+)</name>
        <dbReference type="ChEBI" id="CHEBI:29105"/>
    </cofactor>
    <text evidence="1">Binds 1 divalent metal cation per subunit. Can use either Co(2+) or Zn(2+).</text>
</comment>
<comment type="cofactor">
    <cofactor evidence="1">
        <name>NAD(+)</name>
        <dbReference type="ChEBI" id="CHEBI:57540"/>
    </cofactor>
</comment>
<comment type="pathway">
    <text evidence="1">Metabolic intermediate biosynthesis; chorismate biosynthesis; chorismate from D-erythrose 4-phosphate and phosphoenolpyruvate: step 2/7.</text>
</comment>
<comment type="subcellular location">
    <subcellularLocation>
        <location evidence="1">Cytoplasm</location>
    </subcellularLocation>
</comment>
<comment type="similarity">
    <text evidence="1">Belongs to the sugar phosphate cyclases superfamily. Dehydroquinate synthase family.</text>
</comment>
<gene>
    <name evidence="1" type="primary">aroB</name>
    <name type="ordered locus">USA300HOU_1403</name>
</gene>
<evidence type="ECO:0000255" key="1">
    <source>
        <dbReference type="HAMAP-Rule" id="MF_00110"/>
    </source>
</evidence>
<feature type="chain" id="PRO_1000094632" description="3-dehydroquinate synthase">
    <location>
        <begin position="1"/>
        <end position="354"/>
    </location>
</feature>
<feature type="binding site" evidence="1">
    <location>
        <begin position="100"/>
        <end position="104"/>
    </location>
    <ligand>
        <name>NAD(+)</name>
        <dbReference type="ChEBI" id="CHEBI:57540"/>
    </ligand>
</feature>
<feature type="binding site" evidence="1">
    <location>
        <begin position="124"/>
        <end position="125"/>
    </location>
    <ligand>
        <name>NAD(+)</name>
        <dbReference type="ChEBI" id="CHEBI:57540"/>
    </ligand>
</feature>
<feature type="binding site" evidence="1">
    <location>
        <position position="136"/>
    </location>
    <ligand>
        <name>NAD(+)</name>
        <dbReference type="ChEBI" id="CHEBI:57540"/>
    </ligand>
</feature>
<feature type="binding site" evidence="1">
    <location>
        <position position="145"/>
    </location>
    <ligand>
        <name>NAD(+)</name>
        <dbReference type="ChEBI" id="CHEBI:57540"/>
    </ligand>
</feature>
<feature type="binding site" evidence="1">
    <location>
        <begin position="163"/>
        <end position="166"/>
    </location>
    <ligand>
        <name>NAD(+)</name>
        <dbReference type="ChEBI" id="CHEBI:57540"/>
    </ligand>
</feature>
<feature type="binding site" evidence="1">
    <location>
        <position position="178"/>
    </location>
    <ligand>
        <name>Zn(2+)</name>
        <dbReference type="ChEBI" id="CHEBI:29105"/>
    </ligand>
</feature>
<feature type="binding site" evidence="1">
    <location>
        <position position="242"/>
    </location>
    <ligand>
        <name>Zn(2+)</name>
        <dbReference type="ChEBI" id="CHEBI:29105"/>
    </ligand>
</feature>
<feature type="binding site" evidence="1">
    <location>
        <position position="256"/>
    </location>
    <ligand>
        <name>Zn(2+)</name>
        <dbReference type="ChEBI" id="CHEBI:29105"/>
    </ligand>
</feature>
<organism>
    <name type="scientific">Staphylococcus aureus (strain USA300 / TCH1516)</name>
    <dbReference type="NCBI Taxonomy" id="451516"/>
    <lineage>
        <taxon>Bacteria</taxon>
        <taxon>Bacillati</taxon>
        <taxon>Bacillota</taxon>
        <taxon>Bacilli</taxon>
        <taxon>Bacillales</taxon>
        <taxon>Staphylococcaceae</taxon>
        <taxon>Staphylococcus</taxon>
    </lineage>
</organism>
<accession>A8Z445</accession>
<name>AROB_STAAT</name>
<keyword id="KW-0028">Amino-acid biosynthesis</keyword>
<keyword id="KW-0057">Aromatic amino acid biosynthesis</keyword>
<keyword id="KW-0170">Cobalt</keyword>
<keyword id="KW-0963">Cytoplasm</keyword>
<keyword id="KW-0456">Lyase</keyword>
<keyword id="KW-0479">Metal-binding</keyword>
<keyword id="KW-0520">NAD</keyword>
<keyword id="KW-0547">Nucleotide-binding</keyword>
<keyword id="KW-0862">Zinc</keyword>
<proteinExistence type="inferred from homology"/>
<reference key="1">
    <citation type="journal article" date="2007" name="BMC Microbiol.">
        <title>Subtle genetic changes enhance virulence of methicillin resistant and sensitive Staphylococcus aureus.</title>
        <authorList>
            <person name="Highlander S.K."/>
            <person name="Hulten K.G."/>
            <person name="Qin X."/>
            <person name="Jiang H."/>
            <person name="Yerrapragada S."/>
            <person name="Mason E.O. Jr."/>
            <person name="Shang Y."/>
            <person name="Williams T.M."/>
            <person name="Fortunov R.M."/>
            <person name="Liu Y."/>
            <person name="Igboeli O."/>
            <person name="Petrosino J."/>
            <person name="Tirumalai M."/>
            <person name="Uzman A."/>
            <person name="Fox G.E."/>
            <person name="Cardenas A.M."/>
            <person name="Muzny D.M."/>
            <person name="Hemphill L."/>
            <person name="Ding Y."/>
            <person name="Dugan S."/>
            <person name="Blyth P.R."/>
            <person name="Buhay C.J."/>
            <person name="Dinh H.H."/>
            <person name="Hawes A.C."/>
            <person name="Holder M."/>
            <person name="Kovar C.L."/>
            <person name="Lee S.L."/>
            <person name="Liu W."/>
            <person name="Nazareth L.V."/>
            <person name="Wang Q."/>
            <person name="Zhou J."/>
            <person name="Kaplan S.L."/>
            <person name="Weinstock G.M."/>
        </authorList>
    </citation>
    <scope>NUCLEOTIDE SEQUENCE [LARGE SCALE GENOMIC DNA]</scope>
    <source>
        <strain>USA300 / TCH1516</strain>
    </source>
</reference>
<dbReference type="EC" id="4.2.3.4" evidence="1"/>
<dbReference type="EMBL" id="CP000730">
    <property type="protein sequence ID" value="ABX29413.1"/>
    <property type="molecule type" value="Genomic_DNA"/>
</dbReference>
<dbReference type="RefSeq" id="WP_000776323.1">
    <property type="nucleotide sequence ID" value="NC_010079.1"/>
</dbReference>
<dbReference type="SMR" id="A8Z445"/>
<dbReference type="KEGG" id="sax:USA300HOU_1403"/>
<dbReference type="HOGENOM" id="CLU_001201_0_1_9"/>
<dbReference type="UniPathway" id="UPA00053">
    <property type="reaction ID" value="UER00085"/>
</dbReference>
<dbReference type="GO" id="GO:0005737">
    <property type="term" value="C:cytoplasm"/>
    <property type="evidence" value="ECO:0007669"/>
    <property type="project" value="UniProtKB-SubCell"/>
</dbReference>
<dbReference type="GO" id="GO:0003856">
    <property type="term" value="F:3-dehydroquinate synthase activity"/>
    <property type="evidence" value="ECO:0007669"/>
    <property type="project" value="UniProtKB-UniRule"/>
</dbReference>
<dbReference type="GO" id="GO:0046872">
    <property type="term" value="F:metal ion binding"/>
    <property type="evidence" value="ECO:0007669"/>
    <property type="project" value="UniProtKB-KW"/>
</dbReference>
<dbReference type="GO" id="GO:0000166">
    <property type="term" value="F:nucleotide binding"/>
    <property type="evidence" value="ECO:0007669"/>
    <property type="project" value="UniProtKB-KW"/>
</dbReference>
<dbReference type="GO" id="GO:0008652">
    <property type="term" value="P:amino acid biosynthetic process"/>
    <property type="evidence" value="ECO:0007669"/>
    <property type="project" value="UniProtKB-KW"/>
</dbReference>
<dbReference type="GO" id="GO:0009073">
    <property type="term" value="P:aromatic amino acid family biosynthetic process"/>
    <property type="evidence" value="ECO:0007669"/>
    <property type="project" value="UniProtKB-KW"/>
</dbReference>
<dbReference type="GO" id="GO:0009423">
    <property type="term" value="P:chorismate biosynthetic process"/>
    <property type="evidence" value="ECO:0007669"/>
    <property type="project" value="UniProtKB-UniRule"/>
</dbReference>
<dbReference type="FunFam" id="1.20.1090.10:FF:000016">
    <property type="entry name" value="3-dehydroquinate synthase"/>
    <property type="match status" value="1"/>
</dbReference>
<dbReference type="FunFam" id="3.40.50.1970:FF:000019">
    <property type="entry name" value="3-dehydroquinate synthase"/>
    <property type="match status" value="1"/>
</dbReference>
<dbReference type="Gene3D" id="3.40.50.1970">
    <property type="match status" value="1"/>
</dbReference>
<dbReference type="Gene3D" id="1.20.1090.10">
    <property type="entry name" value="Dehydroquinate synthase-like - alpha domain"/>
    <property type="match status" value="1"/>
</dbReference>
<dbReference type="HAMAP" id="MF_00110">
    <property type="entry name" value="DHQ_synthase"/>
    <property type="match status" value="1"/>
</dbReference>
<dbReference type="InterPro" id="IPR050071">
    <property type="entry name" value="Dehydroquinate_synthase"/>
</dbReference>
<dbReference type="InterPro" id="IPR016037">
    <property type="entry name" value="DHQ_synth_AroB"/>
</dbReference>
<dbReference type="InterPro" id="IPR030963">
    <property type="entry name" value="DHQ_synth_fam"/>
</dbReference>
<dbReference type="InterPro" id="IPR030960">
    <property type="entry name" value="DHQS/DOIS_N"/>
</dbReference>
<dbReference type="InterPro" id="IPR056179">
    <property type="entry name" value="DHQS_C"/>
</dbReference>
<dbReference type="NCBIfam" id="TIGR01357">
    <property type="entry name" value="aroB"/>
    <property type="match status" value="1"/>
</dbReference>
<dbReference type="PANTHER" id="PTHR43622">
    <property type="entry name" value="3-DEHYDROQUINATE SYNTHASE"/>
    <property type="match status" value="1"/>
</dbReference>
<dbReference type="PANTHER" id="PTHR43622:SF7">
    <property type="entry name" value="3-DEHYDROQUINATE SYNTHASE, CHLOROPLASTIC"/>
    <property type="match status" value="1"/>
</dbReference>
<dbReference type="Pfam" id="PF01761">
    <property type="entry name" value="DHQ_synthase"/>
    <property type="match status" value="1"/>
</dbReference>
<dbReference type="Pfam" id="PF24621">
    <property type="entry name" value="DHQS_C"/>
    <property type="match status" value="1"/>
</dbReference>
<dbReference type="PIRSF" id="PIRSF001455">
    <property type="entry name" value="DHQ_synth"/>
    <property type="match status" value="1"/>
</dbReference>
<dbReference type="SUPFAM" id="SSF56796">
    <property type="entry name" value="Dehydroquinate synthase-like"/>
    <property type="match status" value="1"/>
</dbReference>